<keyword id="KW-0028">Amino-acid biosynthesis</keyword>
<keyword id="KW-0100">Branched-chain amino acid biosynthesis</keyword>
<keyword id="KW-0963">Cytoplasm</keyword>
<keyword id="KW-0432">Leucine biosynthesis</keyword>
<keyword id="KW-0460">Magnesium</keyword>
<keyword id="KW-0464">Manganese</keyword>
<keyword id="KW-0479">Metal-binding</keyword>
<keyword id="KW-0520">NAD</keyword>
<keyword id="KW-0560">Oxidoreductase</keyword>
<name>LEU3_HAPCH</name>
<comment type="function">
    <text>Catalyzes the oxidation of 3-carboxy-2-hydroxy-4-methylpentanoate (3-isopropylmalate) to 3-carboxy-4-methyl-2-oxopentanoate. The product decarboxylates to 4-methyl-2 oxopentanoate.</text>
</comment>
<comment type="catalytic activity">
    <reaction>
        <text>(2R,3S)-3-isopropylmalate + NAD(+) = 4-methyl-2-oxopentanoate + CO2 + NADH</text>
        <dbReference type="Rhea" id="RHEA:32271"/>
        <dbReference type="ChEBI" id="CHEBI:16526"/>
        <dbReference type="ChEBI" id="CHEBI:17865"/>
        <dbReference type="ChEBI" id="CHEBI:35121"/>
        <dbReference type="ChEBI" id="CHEBI:57540"/>
        <dbReference type="ChEBI" id="CHEBI:57945"/>
        <dbReference type="EC" id="1.1.1.85"/>
    </reaction>
</comment>
<comment type="cofactor">
    <cofactor evidence="1">
        <name>Mg(2+)</name>
        <dbReference type="ChEBI" id="CHEBI:18420"/>
    </cofactor>
    <cofactor evidence="1">
        <name>Mn(2+)</name>
        <dbReference type="ChEBI" id="CHEBI:29035"/>
    </cofactor>
    <text evidence="1">Binds 1 Mg(2+) or Mn(2+) ion per subunit.</text>
</comment>
<comment type="pathway">
    <text>Amino-acid biosynthesis; L-leucine biosynthesis; L-leucine from 3-methyl-2-oxobutanoate: step 3/4.</text>
</comment>
<comment type="subunit">
    <text evidence="1">Homodimer.</text>
</comment>
<comment type="subcellular location">
    <subcellularLocation>
        <location>Cytoplasm</location>
    </subcellularLocation>
</comment>
<comment type="similarity">
    <text evidence="2">Belongs to the isocitrate and isopropylmalate dehydrogenases family.</text>
</comment>
<evidence type="ECO:0000250" key="1"/>
<evidence type="ECO:0000305" key="2"/>
<sequence>MTTTYKILVLPGDHIGPEIMAEAIKVLTTIETHRPNLHFNLTTDLVGGTSIDTHGVPITQSVLDAAKASDAVLFGSIGGPEWAGVHPTPESGLLQLRQHLDAFANLRPCEFLVPSLVGASPIREHVVKGTRFIVVRENCGGAYFGEKKEEEDVASDLWVYTRPEIERLARVSAAVARIMGRSEDDNQAATVWSADKANVLASGRLWRRITSDIFAKEFPDITLQHQLADSMAMLMVRDPRRFNGVIHTDNTFGDILSDISGAITGTLGLMPSASLCGVPGEGHRSNGIYEPVHGSAPDISGKGLANPVAQILSVAMMLRYSMGLEKEATAVERAVVKVLDAKSEGGLEIRTGDLGGRATCSQVGDAVCEVLGPLLQGKKA</sequence>
<reference key="1">
    <citation type="submission" date="1995-05" db="EMBL/GenBank/DDBJ databases">
        <authorList>
            <person name="Kimura H."/>
            <person name="Matumura S."/>
            <person name="Suzuki M."/>
            <person name="Sumino Y."/>
        </authorList>
    </citation>
    <scope>NUCLEOTIDE SEQUENCE [GENOMIC DNA]</scope>
    <source>
        <strain>M8650</strain>
    </source>
</reference>
<accession>Q12545</accession>
<dbReference type="EC" id="1.1.1.85"/>
<dbReference type="EMBL" id="D50665">
    <property type="protein sequence ID" value="BAA09319.1"/>
    <property type="molecule type" value="Genomic_DNA"/>
</dbReference>
<dbReference type="SMR" id="Q12545"/>
<dbReference type="UniPathway" id="UPA00048">
    <property type="reaction ID" value="UER00072"/>
</dbReference>
<dbReference type="GO" id="GO:0005829">
    <property type="term" value="C:cytosol"/>
    <property type="evidence" value="ECO:0007669"/>
    <property type="project" value="TreeGrafter"/>
</dbReference>
<dbReference type="GO" id="GO:0003862">
    <property type="term" value="F:3-isopropylmalate dehydrogenase activity"/>
    <property type="evidence" value="ECO:0007669"/>
    <property type="project" value="UniProtKB-EC"/>
</dbReference>
<dbReference type="GO" id="GO:0000287">
    <property type="term" value="F:magnesium ion binding"/>
    <property type="evidence" value="ECO:0007669"/>
    <property type="project" value="InterPro"/>
</dbReference>
<dbReference type="GO" id="GO:0051287">
    <property type="term" value="F:NAD binding"/>
    <property type="evidence" value="ECO:0007669"/>
    <property type="project" value="InterPro"/>
</dbReference>
<dbReference type="GO" id="GO:0009098">
    <property type="term" value="P:L-leucine biosynthetic process"/>
    <property type="evidence" value="ECO:0007669"/>
    <property type="project" value="UniProtKB-UniPathway"/>
</dbReference>
<dbReference type="FunFam" id="3.40.718.10:FF:000006">
    <property type="entry name" value="3-isopropylmalate dehydrogenase"/>
    <property type="match status" value="1"/>
</dbReference>
<dbReference type="Gene3D" id="3.40.718.10">
    <property type="entry name" value="Isopropylmalate Dehydrogenase"/>
    <property type="match status" value="1"/>
</dbReference>
<dbReference type="InterPro" id="IPR019818">
    <property type="entry name" value="IsoCit/isopropylmalate_DH_CS"/>
</dbReference>
<dbReference type="InterPro" id="IPR024084">
    <property type="entry name" value="IsoPropMal-DH-like_dom"/>
</dbReference>
<dbReference type="InterPro" id="IPR004429">
    <property type="entry name" value="Isopropylmalate_DH"/>
</dbReference>
<dbReference type="NCBIfam" id="TIGR00169">
    <property type="entry name" value="leuB"/>
    <property type="match status" value="1"/>
</dbReference>
<dbReference type="PANTHER" id="PTHR42979">
    <property type="entry name" value="3-ISOPROPYLMALATE DEHYDROGENASE"/>
    <property type="match status" value="1"/>
</dbReference>
<dbReference type="PANTHER" id="PTHR42979:SF4">
    <property type="entry name" value="3-ISOPROPYLMALATE DEHYDROGENASE"/>
    <property type="match status" value="1"/>
</dbReference>
<dbReference type="Pfam" id="PF00180">
    <property type="entry name" value="Iso_dh"/>
    <property type="match status" value="1"/>
</dbReference>
<dbReference type="SMART" id="SM01329">
    <property type="entry name" value="Iso_dh"/>
    <property type="match status" value="1"/>
</dbReference>
<dbReference type="SUPFAM" id="SSF53659">
    <property type="entry name" value="Isocitrate/Isopropylmalate dehydrogenase-like"/>
    <property type="match status" value="1"/>
</dbReference>
<dbReference type="PROSITE" id="PS00470">
    <property type="entry name" value="IDH_IMDH"/>
    <property type="match status" value="1"/>
</dbReference>
<gene>
    <name type="primary">LEU2</name>
</gene>
<proteinExistence type="inferred from homology"/>
<organism>
    <name type="scientific">Hapsidospora chrysogena</name>
    <name type="common">Acremonium chrysogenum</name>
    <dbReference type="NCBI Taxonomy" id="5044"/>
    <lineage>
        <taxon>Eukaryota</taxon>
        <taxon>Fungi</taxon>
        <taxon>Dikarya</taxon>
        <taxon>Ascomycota</taxon>
        <taxon>Pezizomycotina</taxon>
        <taxon>Sordariomycetes</taxon>
        <taxon>Hypocreomycetidae</taxon>
        <taxon>Hypocreales</taxon>
        <taxon>Bionectriaceae</taxon>
        <taxon>Hapsidospora</taxon>
    </lineage>
</organism>
<feature type="chain" id="PRO_0000083607" description="3-isopropylmalate dehydrogenase">
    <location>
        <begin position="1"/>
        <end position="380"/>
    </location>
</feature>
<feature type="binding site" evidence="1">
    <location>
        <begin position="79"/>
        <end position="90"/>
    </location>
    <ligand>
        <name>NAD(+)</name>
        <dbReference type="ChEBI" id="CHEBI:57540"/>
    </ligand>
</feature>
<feature type="binding site" evidence="1">
    <location>
        <position position="97"/>
    </location>
    <ligand>
        <name>substrate</name>
    </ligand>
</feature>
<feature type="binding site" evidence="1">
    <location>
        <position position="107"/>
    </location>
    <ligand>
        <name>substrate</name>
    </ligand>
</feature>
<feature type="binding site" evidence="1">
    <location>
        <position position="136"/>
    </location>
    <ligand>
        <name>substrate</name>
    </ligand>
</feature>
<feature type="binding site" evidence="1">
    <location>
        <position position="229"/>
    </location>
    <ligand>
        <name>Mg(2+)</name>
        <dbReference type="ChEBI" id="CHEBI:18420"/>
    </ligand>
</feature>
<feature type="binding site" evidence="1">
    <location>
        <position position="229"/>
    </location>
    <ligand>
        <name>substrate</name>
    </ligand>
</feature>
<feature type="binding site" evidence="1">
    <location>
        <position position="254"/>
    </location>
    <ligand>
        <name>Mg(2+)</name>
        <dbReference type="ChEBI" id="CHEBI:18420"/>
    </ligand>
</feature>
<feature type="binding site" evidence="1">
    <location>
        <position position="258"/>
    </location>
    <ligand>
        <name>Mg(2+)</name>
        <dbReference type="ChEBI" id="CHEBI:18420"/>
    </ligand>
</feature>
<feature type="binding site" evidence="1">
    <location>
        <begin position="294"/>
        <end position="306"/>
    </location>
    <ligand>
        <name>NAD(+)</name>
        <dbReference type="ChEBI" id="CHEBI:57540"/>
    </ligand>
</feature>
<feature type="site" description="Important for catalysis" evidence="1">
    <location>
        <position position="143"/>
    </location>
</feature>
<feature type="site" description="Important for catalysis" evidence="1">
    <location>
        <position position="196"/>
    </location>
</feature>
<protein>
    <recommendedName>
        <fullName>3-isopropylmalate dehydrogenase</fullName>
        <shortName>3-IPM-DH</shortName>
        <shortName>IMDH</shortName>
        <ecNumber>1.1.1.85</ecNumber>
    </recommendedName>
    <alternativeName>
        <fullName>Beta-IPM dehydrogenase</fullName>
    </alternativeName>
</protein>